<feature type="chain" id="PRO_0000175484" description="DNA-directed RNA polymerase subunit alpha">
    <location>
        <begin position="1"/>
        <end position="339"/>
    </location>
</feature>
<feature type="region of interest" description="Alpha N-terminal domain (alpha-NTD)" evidence="1">
    <location>
        <begin position="1"/>
        <end position="233"/>
    </location>
</feature>
<feature type="region of interest" description="Alpha C-terminal domain (alpha-CTD)" evidence="1">
    <location>
        <begin position="264"/>
        <end position="339"/>
    </location>
</feature>
<gene>
    <name evidence="1" type="primary">rpoA</name>
</gene>
<accession>P92418</accession>
<proteinExistence type="inferred from homology"/>
<reference key="1">
    <citation type="journal article" date="1997" name="Mol. Phylogenet. Evol.">
        <title>Phylogenetic analysis of the Triticeae (Poaceae) based on rpoA sequence data.</title>
        <authorList>
            <person name="Petersen G."/>
            <person name="Seberg O."/>
        </authorList>
    </citation>
    <scope>NUCLEOTIDE SEQUENCE [GENOMIC DNA]</scope>
    <source>
        <strain>H917</strain>
        <tissue>Leaf</tissue>
    </source>
</reference>
<evidence type="ECO:0000255" key="1">
    <source>
        <dbReference type="HAMAP-Rule" id="MF_00059"/>
    </source>
</evidence>
<organism>
    <name type="scientific">Psathyrostachys fragilis</name>
    <name type="common">Russian wild rye</name>
    <name type="synonym">Hordeum fragile</name>
    <dbReference type="NCBI Taxonomy" id="37729"/>
    <lineage>
        <taxon>Eukaryota</taxon>
        <taxon>Viridiplantae</taxon>
        <taxon>Streptophyta</taxon>
        <taxon>Embryophyta</taxon>
        <taxon>Tracheophyta</taxon>
        <taxon>Spermatophyta</taxon>
        <taxon>Magnoliopsida</taxon>
        <taxon>Liliopsida</taxon>
        <taxon>Poales</taxon>
        <taxon>Poaceae</taxon>
        <taxon>BOP clade</taxon>
        <taxon>Pooideae</taxon>
        <taxon>Triticodae</taxon>
        <taxon>Triticeae</taxon>
        <taxon>Hordeinae</taxon>
        <taxon>Psathyrostachys</taxon>
    </lineage>
</organism>
<dbReference type="EC" id="2.7.7.6" evidence="1"/>
<dbReference type="EMBL" id="Z77752">
    <property type="protein sequence ID" value="CAB01333.1"/>
    <property type="molecule type" value="Genomic_DNA"/>
</dbReference>
<dbReference type="GO" id="GO:0009507">
    <property type="term" value="C:chloroplast"/>
    <property type="evidence" value="ECO:0007669"/>
    <property type="project" value="UniProtKB-SubCell"/>
</dbReference>
<dbReference type="GO" id="GO:0000428">
    <property type="term" value="C:DNA-directed RNA polymerase complex"/>
    <property type="evidence" value="ECO:0007669"/>
    <property type="project" value="UniProtKB-KW"/>
</dbReference>
<dbReference type="GO" id="GO:0005739">
    <property type="term" value="C:mitochondrion"/>
    <property type="evidence" value="ECO:0007669"/>
    <property type="project" value="GOC"/>
</dbReference>
<dbReference type="GO" id="GO:0003677">
    <property type="term" value="F:DNA binding"/>
    <property type="evidence" value="ECO:0007669"/>
    <property type="project" value="UniProtKB-UniRule"/>
</dbReference>
<dbReference type="GO" id="GO:0003899">
    <property type="term" value="F:DNA-directed RNA polymerase activity"/>
    <property type="evidence" value="ECO:0007669"/>
    <property type="project" value="UniProtKB-UniRule"/>
</dbReference>
<dbReference type="GO" id="GO:0046983">
    <property type="term" value="F:protein dimerization activity"/>
    <property type="evidence" value="ECO:0007669"/>
    <property type="project" value="InterPro"/>
</dbReference>
<dbReference type="GO" id="GO:0006351">
    <property type="term" value="P:DNA-templated transcription"/>
    <property type="evidence" value="ECO:0007669"/>
    <property type="project" value="UniProtKB-UniRule"/>
</dbReference>
<dbReference type="CDD" id="cd06928">
    <property type="entry name" value="RNAP_alpha_NTD"/>
    <property type="match status" value="1"/>
</dbReference>
<dbReference type="FunFam" id="1.10.150.20:FF:000021">
    <property type="entry name" value="DNA-directed RNA polymerase subunit alpha"/>
    <property type="match status" value="1"/>
</dbReference>
<dbReference type="FunFam" id="2.170.120.12:FF:000001">
    <property type="entry name" value="DNA-directed RNA polymerase subunit alpha"/>
    <property type="match status" value="1"/>
</dbReference>
<dbReference type="Gene3D" id="1.10.150.20">
    <property type="entry name" value="5' to 3' exonuclease, C-terminal subdomain"/>
    <property type="match status" value="1"/>
</dbReference>
<dbReference type="Gene3D" id="2.170.120.12">
    <property type="entry name" value="DNA-directed RNA polymerase, insert domain"/>
    <property type="match status" value="1"/>
</dbReference>
<dbReference type="Gene3D" id="3.30.1360.10">
    <property type="entry name" value="RNA polymerase, RBP11-like subunit"/>
    <property type="match status" value="1"/>
</dbReference>
<dbReference type="HAMAP" id="MF_00059">
    <property type="entry name" value="RNApol_bact_RpoA"/>
    <property type="match status" value="1"/>
</dbReference>
<dbReference type="InterPro" id="IPR011262">
    <property type="entry name" value="DNA-dir_RNA_pol_insert"/>
</dbReference>
<dbReference type="InterPro" id="IPR011263">
    <property type="entry name" value="DNA-dir_RNA_pol_RpoA/D/Rpb3"/>
</dbReference>
<dbReference type="InterPro" id="IPR011773">
    <property type="entry name" value="DNA-dir_RpoA"/>
</dbReference>
<dbReference type="InterPro" id="IPR036603">
    <property type="entry name" value="RBP11-like"/>
</dbReference>
<dbReference type="InterPro" id="IPR011260">
    <property type="entry name" value="RNAP_asu_C"/>
</dbReference>
<dbReference type="InterPro" id="IPR036643">
    <property type="entry name" value="RNApol_insert_sf"/>
</dbReference>
<dbReference type="NCBIfam" id="TIGR02027">
    <property type="entry name" value="rpoA"/>
    <property type="match status" value="1"/>
</dbReference>
<dbReference type="Pfam" id="PF01000">
    <property type="entry name" value="RNA_pol_A_bac"/>
    <property type="match status" value="1"/>
</dbReference>
<dbReference type="Pfam" id="PF03118">
    <property type="entry name" value="RNA_pol_A_CTD"/>
    <property type="match status" value="1"/>
</dbReference>
<dbReference type="Pfam" id="PF01193">
    <property type="entry name" value="RNA_pol_L"/>
    <property type="match status" value="1"/>
</dbReference>
<dbReference type="SMART" id="SM00662">
    <property type="entry name" value="RPOLD"/>
    <property type="match status" value="1"/>
</dbReference>
<dbReference type="SUPFAM" id="SSF47789">
    <property type="entry name" value="C-terminal domain of RNA polymerase alpha subunit"/>
    <property type="match status" value="1"/>
</dbReference>
<dbReference type="SUPFAM" id="SSF56553">
    <property type="entry name" value="Insert subdomain of RNA polymerase alpha subunit"/>
    <property type="match status" value="1"/>
</dbReference>
<dbReference type="SUPFAM" id="SSF55257">
    <property type="entry name" value="RBP11-like subunits of RNA polymerase"/>
    <property type="match status" value="1"/>
</dbReference>
<protein>
    <recommendedName>
        <fullName evidence="1">DNA-directed RNA polymerase subunit alpha</fullName>
        <shortName evidence="1">PEP</shortName>
        <ecNumber evidence="1">2.7.7.6</ecNumber>
    </recommendedName>
    <alternativeName>
        <fullName evidence="1">Plastid-encoded RNA polymerase subunit alpha</fullName>
        <shortName evidence="1">RNA polymerase subunit alpha</shortName>
    </alternativeName>
</protein>
<comment type="function">
    <text evidence="1">DNA-dependent RNA polymerase catalyzes the transcription of DNA into RNA using the four ribonucleoside triphosphates as substrates.</text>
</comment>
<comment type="catalytic activity">
    <reaction evidence="1">
        <text>RNA(n) + a ribonucleoside 5'-triphosphate = RNA(n+1) + diphosphate</text>
        <dbReference type="Rhea" id="RHEA:21248"/>
        <dbReference type="Rhea" id="RHEA-COMP:14527"/>
        <dbReference type="Rhea" id="RHEA-COMP:17342"/>
        <dbReference type="ChEBI" id="CHEBI:33019"/>
        <dbReference type="ChEBI" id="CHEBI:61557"/>
        <dbReference type="ChEBI" id="CHEBI:140395"/>
        <dbReference type="EC" id="2.7.7.6"/>
    </reaction>
</comment>
<comment type="subunit">
    <text evidence="1">In plastids the minimal PEP RNA polymerase catalytic core is composed of four subunits: alpha, beta, beta', and beta''. When a (nuclear-encoded) sigma factor is associated with the core the holoenzyme is formed, which can initiate transcription.</text>
</comment>
<comment type="subcellular location">
    <subcellularLocation>
        <location>Plastid</location>
        <location>Chloroplast</location>
    </subcellularLocation>
</comment>
<comment type="domain">
    <text evidence="1">The N-terminal domain is essential for RNAP assembly and basal transcription, whereas the C-terminal domain is involved in interaction with transcriptional regulators and with upstream promoter elements.</text>
</comment>
<comment type="similarity">
    <text evidence="1">Belongs to the RNA polymerase alpha chain family.</text>
</comment>
<name>RPOA_PSAFR</name>
<geneLocation type="chloroplast"/>
<keyword id="KW-0150">Chloroplast</keyword>
<keyword id="KW-0240">DNA-directed RNA polymerase</keyword>
<keyword id="KW-0548">Nucleotidyltransferase</keyword>
<keyword id="KW-0934">Plastid</keyword>
<keyword id="KW-0804">Transcription</keyword>
<keyword id="KW-0808">Transferase</keyword>
<sequence>MVREEVAGSTQTLQWKCVESRVDSKRLYYGRFILSPLRKGQADTVGIALRRALLGEIEGTCITRAKFGXVPHEYSTIAGIEESVQEILLNLKEIVLRSNLYGVRDASICVKGPRYITAQDIILPPSVEIVDTAQPIANLTEPIDFCIDLQIKRDRGYQTELRKNYQDGSYPIDAVSMPVRNVNYSIFSCGNGNEKHEILFLEIWTNGSLTPKEALYEASRNLIDLFLPFLHAEEEGTSFEENKNRFTPPLFTFQKRLTNLKKNKKGIPLNCIFIDQLELTSRTYNCLKRANIHTLLDLLSKTEEDLMRIDSFRMEDRKHIWDTLEKHLPIDLLKNKLSF</sequence>